<dbReference type="EMBL" id="AE016879">
    <property type="protein sequence ID" value="AAP27696.1"/>
    <property type="molecule type" value="Genomic_DNA"/>
</dbReference>
<dbReference type="EMBL" id="AE017334">
    <property type="protein sequence ID" value="AAT33081.1"/>
    <property type="molecule type" value="Genomic_DNA"/>
</dbReference>
<dbReference type="EMBL" id="AE017225">
    <property type="protein sequence ID" value="AAT55982.1"/>
    <property type="molecule type" value="Genomic_DNA"/>
</dbReference>
<dbReference type="RefSeq" id="NP_846210.1">
    <property type="nucleotide sequence ID" value="NC_003997.3"/>
</dbReference>
<dbReference type="RefSeq" id="WP_000550088.1">
    <property type="nucleotide sequence ID" value="NZ_WXXJ01000026.1"/>
</dbReference>
<dbReference type="RefSeq" id="YP_029931.1">
    <property type="nucleotide sequence ID" value="NC_005945.1"/>
</dbReference>
<dbReference type="SMR" id="Q81WK6"/>
<dbReference type="IntAct" id="Q81WK6">
    <property type="interactions" value="1"/>
</dbReference>
<dbReference type="STRING" id="261594.GBAA_3967"/>
<dbReference type="DNASU" id="1086805"/>
<dbReference type="GeneID" id="45023657"/>
<dbReference type="KEGG" id="ban:BA_3967"/>
<dbReference type="KEGG" id="bar:GBAA_3967"/>
<dbReference type="KEGG" id="bat:BAS3680"/>
<dbReference type="PATRIC" id="fig|198094.11.peg.3937"/>
<dbReference type="eggNOG" id="COG1220">
    <property type="taxonomic scope" value="Bacteria"/>
</dbReference>
<dbReference type="HOGENOM" id="CLU_033123_0_0_9"/>
<dbReference type="OMA" id="YGMIKTD"/>
<dbReference type="OrthoDB" id="9804062at2"/>
<dbReference type="Proteomes" id="UP000000427">
    <property type="component" value="Chromosome"/>
</dbReference>
<dbReference type="Proteomes" id="UP000000594">
    <property type="component" value="Chromosome"/>
</dbReference>
<dbReference type="GO" id="GO:0009376">
    <property type="term" value="C:HslUV protease complex"/>
    <property type="evidence" value="ECO:0007669"/>
    <property type="project" value="UniProtKB-UniRule"/>
</dbReference>
<dbReference type="GO" id="GO:0005524">
    <property type="term" value="F:ATP binding"/>
    <property type="evidence" value="ECO:0007669"/>
    <property type="project" value="UniProtKB-UniRule"/>
</dbReference>
<dbReference type="GO" id="GO:0016887">
    <property type="term" value="F:ATP hydrolysis activity"/>
    <property type="evidence" value="ECO:0007669"/>
    <property type="project" value="InterPro"/>
</dbReference>
<dbReference type="GO" id="GO:0008233">
    <property type="term" value="F:peptidase activity"/>
    <property type="evidence" value="ECO:0007669"/>
    <property type="project" value="InterPro"/>
</dbReference>
<dbReference type="GO" id="GO:0036402">
    <property type="term" value="F:proteasome-activating activity"/>
    <property type="evidence" value="ECO:0007669"/>
    <property type="project" value="UniProtKB-UniRule"/>
</dbReference>
<dbReference type="GO" id="GO:0043335">
    <property type="term" value="P:protein unfolding"/>
    <property type="evidence" value="ECO:0007669"/>
    <property type="project" value="UniProtKB-UniRule"/>
</dbReference>
<dbReference type="GO" id="GO:0051603">
    <property type="term" value="P:proteolysis involved in protein catabolic process"/>
    <property type="evidence" value="ECO:0007669"/>
    <property type="project" value="TreeGrafter"/>
</dbReference>
<dbReference type="CDD" id="cd19498">
    <property type="entry name" value="RecA-like_HslU"/>
    <property type="match status" value="1"/>
</dbReference>
<dbReference type="FunFam" id="3.40.50.300:FF:000220">
    <property type="entry name" value="ATP-dependent protease ATPase subunit HslU"/>
    <property type="match status" value="1"/>
</dbReference>
<dbReference type="Gene3D" id="1.10.8.60">
    <property type="match status" value="1"/>
</dbReference>
<dbReference type="Gene3D" id="1.10.8.10">
    <property type="entry name" value="DNA helicase RuvA subunit, C-terminal domain"/>
    <property type="match status" value="2"/>
</dbReference>
<dbReference type="Gene3D" id="3.40.50.300">
    <property type="entry name" value="P-loop containing nucleotide triphosphate hydrolases"/>
    <property type="match status" value="1"/>
</dbReference>
<dbReference type="HAMAP" id="MF_00249">
    <property type="entry name" value="HslU"/>
    <property type="match status" value="1"/>
</dbReference>
<dbReference type="InterPro" id="IPR003593">
    <property type="entry name" value="AAA+_ATPase"/>
</dbReference>
<dbReference type="InterPro" id="IPR050052">
    <property type="entry name" value="ATP-dep_Clp_protease_ClpX"/>
</dbReference>
<dbReference type="InterPro" id="IPR003959">
    <property type="entry name" value="ATPase_AAA_core"/>
</dbReference>
<dbReference type="InterPro" id="IPR019489">
    <property type="entry name" value="Clp_ATPase_C"/>
</dbReference>
<dbReference type="InterPro" id="IPR004491">
    <property type="entry name" value="HslU"/>
</dbReference>
<dbReference type="InterPro" id="IPR027417">
    <property type="entry name" value="P-loop_NTPase"/>
</dbReference>
<dbReference type="NCBIfam" id="TIGR00390">
    <property type="entry name" value="hslU"/>
    <property type="match status" value="1"/>
</dbReference>
<dbReference type="NCBIfam" id="NF003544">
    <property type="entry name" value="PRK05201.1"/>
    <property type="match status" value="1"/>
</dbReference>
<dbReference type="PANTHER" id="PTHR48102">
    <property type="entry name" value="ATP-DEPENDENT CLP PROTEASE ATP-BINDING SUBUNIT CLPX-LIKE, MITOCHONDRIAL-RELATED"/>
    <property type="match status" value="1"/>
</dbReference>
<dbReference type="PANTHER" id="PTHR48102:SF3">
    <property type="entry name" value="ATP-DEPENDENT PROTEASE ATPASE SUBUNIT HSLU"/>
    <property type="match status" value="1"/>
</dbReference>
<dbReference type="Pfam" id="PF00004">
    <property type="entry name" value="AAA"/>
    <property type="match status" value="1"/>
</dbReference>
<dbReference type="Pfam" id="PF07724">
    <property type="entry name" value="AAA_2"/>
    <property type="match status" value="1"/>
</dbReference>
<dbReference type="Pfam" id="PF10431">
    <property type="entry name" value="ClpB_D2-small"/>
    <property type="match status" value="1"/>
</dbReference>
<dbReference type="SMART" id="SM00382">
    <property type="entry name" value="AAA"/>
    <property type="match status" value="1"/>
</dbReference>
<dbReference type="SMART" id="SM01086">
    <property type="entry name" value="ClpB_D2-small"/>
    <property type="match status" value="1"/>
</dbReference>
<dbReference type="SUPFAM" id="SSF52540">
    <property type="entry name" value="P-loop containing nucleoside triphosphate hydrolases"/>
    <property type="match status" value="1"/>
</dbReference>
<proteinExistence type="inferred from homology"/>
<accession>Q81WK6</accession>
<accession>Q6HUQ7</accession>
<accession>Q6KNY8</accession>
<name>HSLU_BACAN</name>
<evidence type="ECO:0000255" key="1">
    <source>
        <dbReference type="HAMAP-Rule" id="MF_00249"/>
    </source>
</evidence>
<organism>
    <name type="scientific">Bacillus anthracis</name>
    <dbReference type="NCBI Taxonomy" id="1392"/>
    <lineage>
        <taxon>Bacteria</taxon>
        <taxon>Bacillati</taxon>
        <taxon>Bacillota</taxon>
        <taxon>Bacilli</taxon>
        <taxon>Bacillales</taxon>
        <taxon>Bacillaceae</taxon>
        <taxon>Bacillus</taxon>
        <taxon>Bacillus cereus group</taxon>
    </lineage>
</organism>
<keyword id="KW-0067">ATP-binding</keyword>
<keyword id="KW-0143">Chaperone</keyword>
<keyword id="KW-0963">Cytoplasm</keyword>
<keyword id="KW-0547">Nucleotide-binding</keyword>
<keyword id="KW-1185">Reference proteome</keyword>
<gene>
    <name evidence="1" type="primary">hslU</name>
    <name type="ordered locus">BA_3967</name>
    <name type="ordered locus">GBAA_3967</name>
    <name type="ordered locus">BAS3680</name>
</gene>
<reference key="1">
    <citation type="journal article" date="2003" name="Nature">
        <title>The genome sequence of Bacillus anthracis Ames and comparison to closely related bacteria.</title>
        <authorList>
            <person name="Read T.D."/>
            <person name="Peterson S.N."/>
            <person name="Tourasse N.J."/>
            <person name="Baillie L.W."/>
            <person name="Paulsen I.T."/>
            <person name="Nelson K.E."/>
            <person name="Tettelin H."/>
            <person name="Fouts D.E."/>
            <person name="Eisen J.A."/>
            <person name="Gill S.R."/>
            <person name="Holtzapple E.K."/>
            <person name="Okstad O.A."/>
            <person name="Helgason E."/>
            <person name="Rilstone J."/>
            <person name="Wu M."/>
            <person name="Kolonay J.F."/>
            <person name="Beanan M.J."/>
            <person name="Dodson R.J."/>
            <person name="Brinkac L.M."/>
            <person name="Gwinn M.L."/>
            <person name="DeBoy R.T."/>
            <person name="Madpu R."/>
            <person name="Daugherty S.C."/>
            <person name="Durkin A.S."/>
            <person name="Haft D.H."/>
            <person name="Nelson W.C."/>
            <person name="Peterson J.D."/>
            <person name="Pop M."/>
            <person name="Khouri H.M."/>
            <person name="Radune D."/>
            <person name="Benton J.L."/>
            <person name="Mahamoud Y."/>
            <person name="Jiang L."/>
            <person name="Hance I.R."/>
            <person name="Weidman J.F."/>
            <person name="Berry K.J."/>
            <person name="Plaut R.D."/>
            <person name="Wolf A.M."/>
            <person name="Watkins K.L."/>
            <person name="Nierman W.C."/>
            <person name="Hazen A."/>
            <person name="Cline R.T."/>
            <person name="Redmond C."/>
            <person name="Thwaite J.E."/>
            <person name="White O."/>
            <person name="Salzberg S.L."/>
            <person name="Thomason B."/>
            <person name="Friedlander A.M."/>
            <person name="Koehler T.M."/>
            <person name="Hanna P.C."/>
            <person name="Kolstoe A.-B."/>
            <person name="Fraser C.M."/>
        </authorList>
    </citation>
    <scope>NUCLEOTIDE SEQUENCE [LARGE SCALE GENOMIC DNA]</scope>
    <source>
        <strain>Ames / isolate Porton</strain>
    </source>
</reference>
<reference key="2">
    <citation type="journal article" date="2009" name="J. Bacteriol.">
        <title>The complete genome sequence of Bacillus anthracis Ames 'Ancestor'.</title>
        <authorList>
            <person name="Ravel J."/>
            <person name="Jiang L."/>
            <person name="Stanley S.T."/>
            <person name="Wilson M.R."/>
            <person name="Decker R.S."/>
            <person name="Read T.D."/>
            <person name="Worsham P."/>
            <person name="Keim P.S."/>
            <person name="Salzberg S.L."/>
            <person name="Fraser-Liggett C.M."/>
            <person name="Rasko D.A."/>
        </authorList>
    </citation>
    <scope>NUCLEOTIDE SEQUENCE [LARGE SCALE GENOMIC DNA]</scope>
    <source>
        <strain>Ames ancestor</strain>
    </source>
</reference>
<reference key="3">
    <citation type="submission" date="2004-01" db="EMBL/GenBank/DDBJ databases">
        <title>Complete genome sequence of Bacillus anthracis Sterne.</title>
        <authorList>
            <person name="Brettin T.S."/>
            <person name="Bruce D."/>
            <person name="Challacombe J.F."/>
            <person name="Gilna P."/>
            <person name="Han C."/>
            <person name="Hill K."/>
            <person name="Hitchcock P."/>
            <person name="Jackson P."/>
            <person name="Keim P."/>
            <person name="Longmire J."/>
            <person name="Lucas S."/>
            <person name="Okinaka R."/>
            <person name="Richardson P."/>
            <person name="Rubin E."/>
            <person name="Tice H."/>
        </authorList>
    </citation>
    <scope>NUCLEOTIDE SEQUENCE [LARGE SCALE GENOMIC DNA]</scope>
    <source>
        <strain>Sterne</strain>
    </source>
</reference>
<comment type="function">
    <text evidence="1">ATPase subunit of a proteasome-like degradation complex; this subunit has chaperone activity. The binding of ATP and its subsequent hydrolysis by HslU are essential for unfolding of protein substrates subsequently hydrolyzed by HslV. HslU recognizes the N-terminal part of its protein substrates and unfolds these before they are guided to HslV for hydrolysis.</text>
</comment>
<comment type="subunit">
    <text evidence="1">A double ring-shaped homohexamer of HslV is capped on each side by a ring-shaped HslU homohexamer. The assembly of the HslU/HslV complex is dependent on binding of ATP.</text>
</comment>
<comment type="subcellular location">
    <subcellularLocation>
        <location evidence="1">Cytoplasm</location>
    </subcellularLocation>
</comment>
<comment type="similarity">
    <text evidence="1">Belongs to the ClpX chaperone family. HslU subfamily.</text>
</comment>
<protein>
    <recommendedName>
        <fullName evidence="1">ATP-dependent protease ATPase subunit HslU</fullName>
    </recommendedName>
    <alternativeName>
        <fullName evidence="1">Unfoldase HslU</fullName>
    </alternativeName>
</protein>
<feature type="chain" id="PRO_0000160470" description="ATP-dependent protease ATPase subunit HslU">
    <location>
        <begin position="1"/>
        <end position="463"/>
    </location>
</feature>
<feature type="binding site" evidence="1">
    <location>
        <position position="19"/>
    </location>
    <ligand>
        <name>ATP</name>
        <dbReference type="ChEBI" id="CHEBI:30616"/>
    </ligand>
</feature>
<feature type="binding site" evidence="1">
    <location>
        <begin position="61"/>
        <end position="66"/>
    </location>
    <ligand>
        <name>ATP</name>
        <dbReference type="ChEBI" id="CHEBI:30616"/>
    </ligand>
</feature>
<feature type="binding site" evidence="1">
    <location>
        <position position="277"/>
    </location>
    <ligand>
        <name>ATP</name>
        <dbReference type="ChEBI" id="CHEBI:30616"/>
    </ligand>
</feature>
<feature type="binding site" evidence="1">
    <location>
        <position position="341"/>
    </location>
    <ligand>
        <name>ATP</name>
        <dbReference type="ChEBI" id="CHEBI:30616"/>
    </ligand>
</feature>
<feature type="binding site" evidence="1">
    <location>
        <position position="413"/>
    </location>
    <ligand>
        <name>ATP</name>
        <dbReference type="ChEBI" id="CHEBI:30616"/>
    </ligand>
</feature>
<sequence length="463" mass="52213">MHLHFTPRQIVEKLDQYIIGQKDAKKAVAVALRNRYRRSKLAENLRDEIAPKNILMIGPTGVGKTEVARRMAKLVGAPFIKVEATKFTEVGYVGRDVESMVRDLVETSVRIVKEEMVVKVQDKAEEQANQRLVEILVPSPEKQSGFKNPLEMLFGGTQNSNQTTDSQEDVEIEKKRQDVERKLAAGLLEDEIVSIEVTEQQSSMFDMLQGTGMEQMGMNFQDALGSFMPKKTKKRKLSVKEARKVLTNEEAQRLIDMDEVTQEAVYRAEQLGIIFIDEIDKIAGKQSNSVDVSREGVQRDILPIVEGSNVATKYGSVKTDYILFVAAGAFHMSKPSDLIPELQGRFPIRVELTKLSTDDFVKILIEPDNALIKQYMALLATEGIEIEFSDEAIRKIAEIAYQVNQDTDNIGARRLHTIMEKLLEDLSFEASEITLEKITITPQYVEEKLATIAKNKDVSQFIL</sequence>